<keyword id="KW-1185">Reference proteome</keyword>
<keyword id="KW-0687">Ribonucleoprotein</keyword>
<keyword id="KW-0689">Ribosomal protein</keyword>
<name>RL29_BUCBP</name>
<organism>
    <name type="scientific">Buchnera aphidicola subsp. Baizongia pistaciae (strain Bp)</name>
    <dbReference type="NCBI Taxonomy" id="224915"/>
    <lineage>
        <taxon>Bacteria</taxon>
        <taxon>Pseudomonadati</taxon>
        <taxon>Pseudomonadota</taxon>
        <taxon>Gammaproteobacteria</taxon>
        <taxon>Enterobacterales</taxon>
        <taxon>Erwiniaceae</taxon>
        <taxon>Buchnera</taxon>
    </lineage>
</organism>
<evidence type="ECO:0000255" key="1">
    <source>
        <dbReference type="HAMAP-Rule" id="MF_00374"/>
    </source>
</evidence>
<evidence type="ECO:0000305" key="2"/>
<dbReference type="EMBL" id="AE016826">
    <property type="protein sequence ID" value="AAO27165.1"/>
    <property type="molecule type" value="Genomic_DNA"/>
</dbReference>
<dbReference type="RefSeq" id="WP_011091566.1">
    <property type="nucleotide sequence ID" value="NC_004545.1"/>
</dbReference>
<dbReference type="SMR" id="Q89A74"/>
<dbReference type="STRING" id="224915.bbp_459"/>
<dbReference type="KEGG" id="bab:bbp_459"/>
<dbReference type="eggNOG" id="COG0255">
    <property type="taxonomic scope" value="Bacteria"/>
</dbReference>
<dbReference type="HOGENOM" id="CLU_158491_1_2_6"/>
<dbReference type="OrthoDB" id="9815192at2"/>
<dbReference type="Proteomes" id="UP000000601">
    <property type="component" value="Chromosome"/>
</dbReference>
<dbReference type="GO" id="GO:0022625">
    <property type="term" value="C:cytosolic large ribosomal subunit"/>
    <property type="evidence" value="ECO:0007669"/>
    <property type="project" value="TreeGrafter"/>
</dbReference>
<dbReference type="GO" id="GO:0003735">
    <property type="term" value="F:structural constituent of ribosome"/>
    <property type="evidence" value="ECO:0007669"/>
    <property type="project" value="InterPro"/>
</dbReference>
<dbReference type="GO" id="GO:0006412">
    <property type="term" value="P:translation"/>
    <property type="evidence" value="ECO:0007669"/>
    <property type="project" value="UniProtKB-UniRule"/>
</dbReference>
<dbReference type="CDD" id="cd00427">
    <property type="entry name" value="Ribosomal_L29_HIP"/>
    <property type="match status" value="1"/>
</dbReference>
<dbReference type="Gene3D" id="6.10.140.1970">
    <property type="match status" value="1"/>
</dbReference>
<dbReference type="HAMAP" id="MF_00374">
    <property type="entry name" value="Ribosomal_uL29"/>
    <property type="match status" value="1"/>
</dbReference>
<dbReference type="InterPro" id="IPR050063">
    <property type="entry name" value="Ribosomal_protein_uL29"/>
</dbReference>
<dbReference type="InterPro" id="IPR001854">
    <property type="entry name" value="Ribosomal_uL29"/>
</dbReference>
<dbReference type="InterPro" id="IPR036049">
    <property type="entry name" value="Ribosomal_uL29_sf"/>
</dbReference>
<dbReference type="NCBIfam" id="TIGR00012">
    <property type="entry name" value="L29"/>
    <property type="match status" value="1"/>
</dbReference>
<dbReference type="PANTHER" id="PTHR10916">
    <property type="entry name" value="60S RIBOSOMAL PROTEIN L35/50S RIBOSOMAL PROTEIN L29"/>
    <property type="match status" value="1"/>
</dbReference>
<dbReference type="PANTHER" id="PTHR10916:SF0">
    <property type="entry name" value="LARGE RIBOSOMAL SUBUNIT PROTEIN UL29C"/>
    <property type="match status" value="1"/>
</dbReference>
<dbReference type="Pfam" id="PF00831">
    <property type="entry name" value="Ribosomal_L29"/>
    <property type="match status" value="1"/>
</dbReference>
<dbReference type="SUPFAM" id="SSF46561">
    <property type="entry name" value="Ribosomal protein L29 (L29p)"/>
    <property type="match status" value="1"/>
</dbReference>
<feature type="chain" id="PRO_0000130366" description="Large ribosomal subunit protein uL29">
    <location>
        <begin position="1"/>
        <end position="65"/>
    </location>
</feature>
<comment type="similarity">
    <text evidence="1">Belongs to the universal ribosomal protein uL29 family.</text>
</comment>
<sequence length="65" mass="7736">MKKVEIKKKTIKELNIELMNLLREQFNLTLQHSAKKLQQSHLLQHVRRNIAQVNTILAEKEKECD</sequence>
<protein>
    <recommendedName>
        <fullName evidence="1">Large ribosomal subunit protein uL29</fullName>
    </recommendedName>
    <alternativeName>
        <fullName evidence="2">50S ribosomal protein L29</fullName>
    </alternativeName>
</protein>
<reference key="1">
    <citation type="journal article" date="2003" name="Proc. Natl. Acad. Sci. U.S.A.">
        <title>Reductive genome evolution in Buchnera aphidicola.</title>
        <authorList>
            <person name="van Ham R.C.H.J."/>
            <person name="Kamerbeek J."/>
            <person name="Palacios C."/>
            <person name="Rausell C."/>
            <person name="Abascal F."/>
            <person name="Bastolla U."/>
            <person name="Fernandez J.M."/>
            <person name="Jimenez L."/>
            <person name="Postigo M."/>
            <person name="Silva F.J."/>
            <person name="Tamames J."/>
            <person name="Viguera E."/>
            <person name="Latorre A."/>
            <person name="Valencia A."/>
            <person name="Moran F."/>
            <person name="Moya A."/>
        </authorList>
    </citation>
    <scope>NUCLEOTIDE SEQUENCE [LARGE SCALE GENOMIC DNA]</scope>
    <source>
        <strain>Bp</strain>
    </source>
</reference>
<accession>Q89A74</accession>
<gene>
    <name evidence="1" type="primary">rpmC</name>
    <name type="ordered locus">bbp_459</name>
</gene>
<proteinExistence type="inferred from homology"/>